<reference key="1">
    <citation type="journal article" date="2007" name="Genome Res.">
        <title>Genome characteristics of facultatively symbiotic Frankia sp. strains reflect host range and host plant biogeography.</title>
        <authorList>
            <person name="Normand P."/>
            <person name="Lapierre P."/>
            <person name="Tisa L.S."/>
            <person name="Gogarten J.P."/>
            <person name="Alloisio N."/>
            <person name="Bagnarol E."/>
            <person name="Bassi C.A."/>
            <person name="Berry A.M."/>
            <person name="Bickhart D.M."/>
            <person name="Choisne N."/>
            <person name="Couloux A."/>
            <person name="Cournoyer B."/>
            <person name="Cruveiller S."/>
            <person name="Daubin V."/>
            <person name="Demange N."/>
            <person name="Francino M.P."/>
            <person name="Goltsman E."/>
            <person name="Huang Y."/>
            <person name="Kopp O.R."/>
            <person name="Labarre L."/>
            <person name="Lapidus A."/>
            <person name="Lavire C."/>
            <person name="Marechal J."/>
            <person name="Martinez M."/>
            <person name="Mastronunzio J.E."/>
            <person name="Mullin B.C."/>
            <person name="Niemann J."/>
            <person name="Pujic P."/>
            <person name="Rawnsley T."/>
            <person name="Rouy Z."/>
            <person name="Schenowitz C."/>
            <person name="Sellstedt A."/>
            <person name="Tavares F."/>
            <person name="Tomkins J.P."/>
            <person name="Vallenet D."/>
            <person name="Valverde C."/>
            <person name="Wall L.G."/>
            <person name="Wang Y."/>
            <person name="Medigue C."/>
            <person name="Benson D.R."/>
        </authorList>
    </citation>
    <scope>NUCLEOTIDE SEQUENCE [LARGE SCALE GENOMIC DNA]</scope>
    <source>
        <strain>DSM 45818 / CECT 9043 / HFP020203 / CcI3</strain>
    </source>
</reference>
<name>RS16_FRACC</name>
<accession>Q2J6Z6</accession>
<keyword id="KW-1185">Reference proteome</keyword>
<keyword id="KW-0687">Ribonucleoprotein</keyword>
<keyword id="KW-0689">Ribosomal protein</keyword>
<proteinExistence type="inferred from homology"/>
<sequence length="148" mass="15951">MATKIKLQRLGKMREPHYRIVVADARTKRDGRVIESIGQYHPKSDPSIIKVDAERVGHWLSVGAQPTEPVLAILKVTGDWQKFKNLPAPPPMKVAEPKADKREIFQAAARAAAGAEDRPATTPKKAKKSGSAEEAEAAPATDAPAAGQ</sequence>
<evidence type="ECO:0000255" key="1">
    <source>
        <dbReference type="HAMAP-Rule" id="MF_00385"/>
    </source>
</evidence>
<evidence type="ECO:0000256" key="2">
    <source>
        <dbReference type="SAM" id="MobiDB-lite"/>
    </source>
</evidence>
<evidence type="ECO:0000305" key="3"/>
<protein>
    <recommendedName>
        <fullName evidence="1">Small ribosomal subunit protein bS16</fullName>
    </recommendedName>
    <alternativeName>
        <fullName evidence="3">30S ribosomal protein S16</fullName>
    </alternativeName>
</protein>
<dbReference type="EMBL" id="CP000249">
    <property type="protein sequence ID" value="ABD12946.1"/>
    <property type="molecule type" value="Genomic_DNA"/>
</dbReference>
<dbReference type="RefSeq" id="WP_011437970.1">
    <property type="nucleotide sequence ID" value="NZ_MSEA01000455.1"/>
</dbReference>
<dbReference type="SMR" id="Q2J6Z6"/>
<dbReference type="STRING" id="106370.Francci3_3594"/>
<dbReference type="KEGG" id="fra:Francci3_3594"/>
<dbReference type="eggNOG" id="COG0228">
    <property type="taxonomic scope" value="Bacteria"/>
</dbReference>
<dbReference type="HOGENOM" id="CLU_100590_1_1_11"/>
<dbReference type="OrthoDB" id="9807878at2"/>
<dbReference type="PhylomeDB" id="Q2J6Z6"/>
<dbReference type="Proteomes" id="UP000001937">
    <property type="component" value="Chromosome"/>
</dbReference>
<dbReference type="GO" id="GO:0005737">
    <property type="term" value="C:cytoplasm"/>
    <property type="evidence" value="ECO:0007669"/>
    <property type="project" value="UniProtKB-ARBA"/>
</dbReference>
<dbReference type="GO" id="GO:0015935">
    <property type="term" value="C:small ribosomal subunit"/>
    <property type="evidence" value="ECO:0007669"/>
    <property type="project" value="TreeGrafter"/>
</dbReference>
<dbReference type="GO" id="GO:0003735">
    <property type="term" value="F:structural constituent of ribosome"/>
    <property type="evidence" value="ECO:0007669"/>
    <property type="project" value="InterPro"/>
</dbReference>
<dbReference type="GO" id="GO:0006412">
    <property type="term" value="P:translation"/>
    <property type="evidence" value="ECO:0007669"/>
    <property type="project" value="UniProtKB-UniRule"/>
</dbReference>
<dbReference type="Gene3D" id="3.30.1320.10">
    <property type="match status" value="1"/>
</dbReference>
<dbReference type="HAMAP" id="MF_00385">
    <property type="entry name" value="Ribosomal_bS16"/>
    <property type="match status" value="1"/>
</dbReference>
<dbReference type="InterPro" id="IPR000307">
    <property type="entry name" value="Ribosomal_bS16"/>
</dbReference>
<dbReference type="InterPro" id="IPR023803">
    <property type="entry name" value="Ribosomal_bS16_dom_sf"/>
</dbReference>
<dbReference type="NCBIfam" id="NF011093">
    <property type="entry name" value="PRK14520.1"/>
    <property type="match status" value="1"/>
</dbReference>
<dbReference type="NCBIfam" id="TIGR00002">
    <property type="entry name" value="S16"/>
    <property type="match status" value="1"/>
</dbReference>
<dbReference type="PANTHER" id="PTHR12919">
    <property type="entry name" value="30S RIBOSOMAL PROTEIN S16"/>
    <property type="match status" value="1"/>
</dbReference>
<dbReference type="PANTHER" id="PTHR12919:SF20">
    <property type="entry name" value="SMALL RIBOSOMAL SUBUNIT PROTEIN BS16M"/>
    <property type="match status" value="1"/>
</dbReference>
<dbReference type="Pfam" id="PF00886">
    <property type="entry name" value="Ribosomal_S16"/>
    <property type="match status" value="1"/>
</dbReference>
<dbReference type="SUPFAM" id="SSF54565">
    <property type="entry name" value="Ribosomal protein S16"/>
    <property type="match status" value="1"/>
</dbReference>
<feature type="chain" id="PRO_0000243809" description="Small ribosomal subunit protein bS16">
    <location>
        <begin position="1"/>
        <end position="148"/>
    </location>
</feature>
<feature type="region of interest" description="Disordered" evidence="2">
    <location>
        <begin position="106"/>
        <end position="148"/>
    </location>
</feature>
<feature type="compositionally biased region" description="Low complexity" evidence="2">
    <location>
        <begin position="137"/>
        <end position="148"/>
    </location>
</feature>
<organism>
    <name type="scientific">Frankia casuarinae (strain DSM 45818 / CECT 9043 / HFP020203 / CcI3)</name>
    <dbReference type="NCBI Taxonomy" id="106370"/>
    <lineage>
        <taxon>Bacteria</taxon>
        <taxon>Bacillati</taxon>
        <taxon>Actinomycetota</taxon>
        <taxon>Actinomycetes</taxon>
        <taxon>Frankiales</taxon>
        <taxon>Frankiaceae</taxon>
        <taxon>Frankia</taxon>
    </lineage>
</organism>
<comment type="similarity">
    <text evidence="1">Belongs to the bacterial ribosomal protein bS16 family.</text>
</comment>
<gene>
    <name evidence="1" type="primary">rpsP</name>
    <name type="ordered locus">Francci3_3594</name>
</gene>